<gene>
    <name evidence="1" type="primary">glyA</name>
    <name type="ordered locus">xcc-b100_3667</name>
</gene>
<comment type="function">
    <text evidence="1">Catalyzes the reversible interconversion of serine and glycine with tetrahydrofolate (THF) serving as the one-carbon carrier. This reaction serves as the major source of one-carbon groups required for the biosynthesis of purines, thymidylate, methionine, and other important biomolecules. Also exhibits THF-independent aldolase activity toward beta-hydroxyamino acids, producing glycine and aldehydes, via a retro-aldol mechanism.</text>
</comment>
<comment type="catalytic activity">
    <reaction evidence="1">
        <text>(6R)-5,10-methylene-5,6,7,8-tetrahydrofolate + glycine + H2O = (6S)-5,6,7,8-tetrahydrofolate + L-serine</text>
        <dbReference type="Rhea" id="RHEA:15481"/>
        <dbReference type="ChEBI" id="CHEBI:15377"/>
        <dbReference type="ChEBI" id="CHEBI:15636"/>
        <dbReference type="ChEBI" id="CHEBI:33384"/>
        <dbReference type="ChEBI" id="CHEBI:57305"/>
        <dbReference type="ChEBI" id="CHEBI:57453"/>
        <dbReference type="EC" id="2.1.2.1"/>
    </reaction>
</comment>
<comment type="cofactor">
    <cofactor evidence="1">
        <name>pyridoxal 5'-phosphate</name>
        <dbReference type="ChEBI" id="CHEBI:597326"/>
    </cofactor>
</comment>
<comment type="pathway">
    <text evidence="1">One-carbon metabolism; tetrahydrofolate interconversion.</text>
</comment>
<comment type="pathway">
    <text evidence="1">Amino-acid biosynthesis; glycine biosynthesis; glycine from L-serine: step 1/1.</text>
</comment>
<comment type="subunit">
    <text evidence="1">Homodimer.</text>
</comment>
<comment type="subcellular location">
    <subcellularLocation>
        <location evidence="1">Cytoplasm</location>
    </subcellularLocation>
</comment>
<comment type="similarity">
    <text evidence="1">Belongs to the SHMT family.</text>
</comment>
<reference key="1">
    <citation type="journal article" date="2008" name="J. Biotechnol.">
        <title>The genome of Xanthomonas campestris pv. campestris B100 and its use for the reconstruction of metabolic pathways involved in xanthan biosynthesis.</title>
        <authorList>
            <person name="Vorhoelter F.-J."/>
            <person name="Schneiker S."/>
            <person name="Goesmann A."/>
            <person name="Krause L."/>
            <person name="Bekel T."/>
            <person name="Kaiser O."/>
            <person name="Linke B."/>
            <person name="Patschkowski T."/>
            <person name="Rueckert C."/>
            <person name="Schmid J."/>
            <person name="Sidhu V.K."/>
            <person name="Sieber V."/>
            <person name="Tauch A."/>
            <person name="Watt S.A."/>
            <person name="Weisshaar B."/>
            <person name="Becker A."/>
            <person name="Niehaus K."/>
            <person name="Puehler A."/>
        </authorList>
    </citation>
    <scope>NUCLEOTIDE SEQUENCE [LARGE SCALE GENOMIC DNA]</scope>
    <source>
        <strain>B100</strain>
    </source>
</reference>
<feature type="chain" id="PRO_1000091596" description="Serine hydroxymethyltransferase">
    <location>
        <begin position="1"/>
        <end position="417"/>
    </location>
</feature>
<feature type="binding site" evidence="1">
    <location>
        <position position="121"/>
    </location>
    <ligand>
        <name>(6S)-5,6,7,8-tetrahydrofolate</name>
        <dbReference type="ChEBI" id="CHEBI:57453"/>
    </ligand>
</feature>
<feature type="binding site" evidence="1">
    <location>
        <begin position="125"/>
        <end position="127"/>
    </location>
    <ligand>
        <name>(6S)-5,6,7,8-tetrahydrofolate</name>
        <dbReference type="ChEBI" id="CHEBI:57453"/>
    </ligand>
</feature>
<feature type="binding site" evidence="1">
    <location>
        <begin position="355"/>
        <end position="357"/>
    </location>
    <ligand>
        <name>(6S)-5,6,7,8-tetrahydrofolate</name>
        <dbReference type="ChEBI" id="CHEBI:57453"/>
    </ligand>
</feature>
<feature type="site" description="Plays an important role in substrate specificity" evidence="1">
    <location>
        <position position="228"/>
    </location>
</feature>
<feature type="modified residue" description="N6-(pyridoxal phosphate)lysine" evidence="1">
    <location>
        <position position="229"/>
    </location>
</feature>
<keyword id="KW-0028">Amino-acid biosynthesis</keyword>
<keyword id="KW-0963">Cytoplasm</keyword>
<keyword id="KW-0554">One-carbon metabolism</keyword>
<keyword id="KW-0663">Pyridoxal phosphate</keyword>
<keyword id="KW-0808">Transferase</keyword>
<protein>
    <recommendedName>
        <fullName evidence="1">Serine hydroxymethyltransferase</fullName>
        <shortName evidence="1">SHMT</shortName>
        <shortName evidence="1">Serine methylase</shortName>
        <ecNumber evidence="1">2.1.2.1</ecNumber>
    </recommendedName>
</protein>
<organism>
    <name type="scientific">Xanthomonas campestris pv. campestris (strain B100)</name>
    <dbReference type="NCBI Taxonomy" id="509169"/>
    <lineage>
        <taxon>Bacteria</taxon>
        <taxon>Pseudomonadati</taxon>
        <taxon>Pseudomonadota</taxon>
        <taxon>Gammaproteobacteria</taxon>
        <taxon>Lysobacterales</taxon>
        <taxon>Lysobacteraceae</taxon>
        <taxon>Xanthomonas</taxon>
    </lineage>
</organism>
<evidence type="ECO:0000255" key="1">
    <source>
        <dbReference type="HAMAP-Rule" id="MF_00051"/>
    </source>
</evidence>
<dbReference type="EC" id="2.1.2.1" evidence="1"/>
<dbReference type="EMBL" id="AM920689">
    <property type="protein sequence ID" value="CAP53032.1"/>
    <property type="molecule type" value="Genomic_DNA"/>
</dbReference>
<dbReference type="SMR" id="B0RVE1"/>
<dbReference type="KEGG" id="xca:xcc-b100_3667"/>
<dbReference type="HOGENOM" id="CLU_022477_2_1_6"/>
<dbReference type="UniPathway" id="UPA00193"/>
<dbReference type="UniPathway" id="UPA00288">
    <property type="reaction ID" value="UER01023"/>
</dbReference>
<dbReference type="Proteomes" id="UP000001188">
    <property type="component" value="Chromosome"/>
</dbReference>
<dbReference type="GO" id="GO:0005829">
    <property type="term" value="C:cytosol"/>
    <property type="evidence" value="ECO:0007669"/>
    <property type="project" value="TreeGrafter"/>
</dbReference>
<dbReference type="GO" id="GO:0004372">
    <property type="term" value="F:glycine hydroxymethyltransferase activity"/>
    <property type="evidence" value="ECO:0007669"/>
    <property type="project" value="UniProtKB-UniRule"/>
</dbReference>
<dbReference type="GO" id="GO:0030170">
    <property type="term" value="F:pyridoxal phosphate binding"/>
    <property type="evidence" value="ECO:0007669"/>
    <property type="project" value="UniProtKB-UniRule"/>
</dbReference>
<dbReference type="GO" id="GO:0019264">
    <property type="term" value="P:glycine biosynthetic process from serine"/>
    <property type="evidence" value="ECO:0007669"/>
    <property type="project" value="UniProtKB-UniRule"/>
</dbReference>
<dbReference type="GO" id="GO:0035999">
    <property type="term" value="P:tetrahydrofolate interconversion"/>
    <property type="evidence" value="ECO:0007669"/>
    <property type="project" value="UniProtKB-UniRule"/>
</dbReference>
<dbReference type="CDD" id="cd00378">
    <property type="entry name" value="SHMT"/>
    <property type="match status" value="1"/>
</dbReference>
<dbReference type="FunFam" id="3.40.640.10:FF:000001">
    <property type="entry name" value="Serine hydroxymethyltransferase"/>
    <property type="match status" value="1"/>
</dbReference>
<dbReference type="FunFam" id="3.90.1150.10:FF:000003">
    <property type="entry name" value="Serine hydroxymethyltransferase"/>
    <property type="match status" value="1"/>
</dbReference>
<dbReference type="Gene3D" id="3.90.1150.10">
    <property type="entry name" value="Aspartate Aminotransferase, domain 1"/>
    <property type="match status" value="1"/>
</dbReference>
<dbReference type="Gene3D" id="3.40.640.10">
    <property type="entry name" value="Type I PLP-dependent aspartate aminotransferase-like (Major domain)"/>
    <property type="match status" value="1"/>
</dbReference>
<dbReference type="HAMAP" id="MF_00051">
    <property type="entry name" value="SHMT"/>
    <property type="match status" value="1"/>
</dbReference>
<dbReference type="InterPro" id="IPR015424">
    <property type="entry name" value="PyrdxlP-dep_Trfase"/>
</dbReference>
<dbReference type="InterPro" id="IPR015421">
    <property type="entry name" value="PyrdxlP-dep_Trfase_major"/>
</dbReference>
<dbReference type="InterPro" id="IPR015422">
    <property type="entry name" value="PyrdxlP-dep_Trfase_small"/>
</dbReference>
<dbReference type="InterPro" id="IPR001085">
    <property type="entry name" value="Ser_HO-MeTrfase"/>
</dbReference>
<dbReference type="InterPro" id="IPR049943">
    <property type="entry name" value="Ser_HO-MeTrfase-like"/>
</dbReference>
<dbReference type="InterPro" id="IPR019798">
    <property type="entry name" value="Ser_HO-MeTrfase_PLP_BS"/>
</dbReference>
<dbReference type="InterPro" id="IPR039429">
    <property type="entry name" value="SHMT-like_dom"/>
</dbReference>
<dbReference type="NCBIfam" id="NF000586">
    <property type="entry name" value="PRK00011.1"/>
    <property type="match status" value="1"/>
</dbReference>
<dbReference type="PANTHER" id="PTHR11680">
    <property type="entry name" value="SERINE HYDROXYMETHYLTRANSFERASE"/>
    <property type="match status" value="1"/>
</dbReference>
<dbReference type="PANTHER" id="PTHR11680:SF50">
    <property type="entry name" value="SERINE HYDROXYMETHYLTRANSFERASE"/>
    <property type="match status" value="1"/>
</dbReference>
<dbReference type="Pfam" id="PF00464">
    <property type="entry name" value="SHMT"/>
    <property type="match status" value="1"/>
</dbReference>
<dbReference type="PIRSF" id="PIRSF000412">
    <property type="entry name" value="SHMT"/>
    <property type="match status" value="1"/>
</dbReference>
<dbReference type="SUPFAM" id="SSF53383">
    <property type="entry name" value="PLP-dependent transferases"/>
    <property type="match status" value="1"/>
</dbReference>
<dbReference type="PROSITE" id="PS00096">
    <property type="entry name" value="SHMT"/>
    <property type="match status" value="1"/>
</dbReference>
<accession>B0RVE1</accession>
<name>GLYA_XANCB</name>
<sequence>MFSRDVRLETYDPELAKAIAAEAGRQEDHVELIASENYCSPLVMEAQGSQLTNKYAEGYPGKRYYGGCEFVDIAEQLAIDRIKQVFGADYANVQPHSGSQANQAVYLALLQPGDTILGMSLAHGGHLTHGAKVNASGKLFNAVQYGVNEQGLIDYDEVQRLATEHKPKMVIAGFSAYSQKIDWARFRAIADSVGAYLFVDMAHVAGLVAAGVYPSPMDHAHVVTSTTHKTLRGPRGGIILAKGAGEDLVKKLQSIVFPGIQGGPLMHVIAAKAVAFKEALEPEFKTYQQQVVKNAQAMANTLIARGYKIVSGGTENHLMLVDMIGRDVSGKDAEAALGKAHITVNKNSVPNDPRSPFVTSGLRLGTPAITTRGYQEQDCVDLANWIADVLDAPADDAVLAKVRDAVTAQCKKYPVYG</sequence>
<proteinExistence type="inferred from homology"/>